<proteinExistence type="evidence at protein level"/>
<feature type="transit peptide" description="Mitochondrion" evidence="6">
    <location>
        <begin position="1"/>
        <end position="20"/>
    </location>
</feature>
<feature type="chain" id="PRO_0000025487" description="Peptidyl-prolyl cis-trans isomerase C, mitochondrial">
    <location>
        <begin position="21"/>
        <end position="182"/>
    </location>
</feature>
<feature type="domain" description="PPIase cyclophilin-type" evidence="1">
    <location>
        <begin position="25"/>
        <end position="181"/>
    </location>
</feature>
<feature type="mutagenesis site" description="Strongly reduces in vitro PPIase activity and in vivo protein folding activity. Reduces binding to cyclosporin A 2-fold." evidence="2">
    <original>R</original>
    <variation>A</variation>
    <location>
        <position position="73"/>
    </location>
</feature>
<feature type="mutagenesis site" description="Strongly reduces in vitro PPIase activity and in vivo protein folding activity. Reduces binding to cyclosporin A 2-fold." evidence="2">
    <original>H</original>
    <variation>Q</variation>
    <location>
        <position position="144"/>
    </location>
</feature>
<protein>
    <recommendedName>
        <fullName>Peptidyl-prolyl cis-trans isomerase C, mitochondrial</fullName>
        <shortName>PPIase C</shortName>
        <ecNumber>5.2.1.8</ecNumber>
    </recommendedName>
    <alternativeName>
        <fullName>Cyclophilin C</fullName>
    </alternativeName>
    <alternativeName>
        <fullName>PPI-III</fullName>
    </alternativeName>
    <alternativeName>
        <fullName>Rotamase C</fullName>
    </alternativeName>
</protein>
<keyword id="KW-0903">Direct protein sequencing</keyword>
<keyword id="KW-0413">Isomerase</keyword>
<keyword id="KW-0496">Mitochondrion</keyword>
<keyword id="KW-1185">Reference proteome</keyword>
<keyword id="KW-0697">Rotamase</keyword>
<keyword id="KW-0809">Transit peptide</keyword>
<comment type="function">
    <text evidence="2 7 8">PPIases accelerate the folding of proteins. It catalyzes the cis-trans isomerization of proline imidic peptide bonds in oligopeptides. This isozyme is required for growth on lactate at high temperature.</text>
</comment>
<comment type="catalytic activity">
    <reaction evidence="8">
        <text>[protein]-peptidylproline (omega=180) = [protein]-peptidylproline (omega=0)</text>
        <dbReference type="Rhea" id="RHEA:16237"/>
        <dbReference type="Rhea" id="RHEA-COMP:10747"/>
        <dbReference type="Rhea" id="RHEA-COMP:10748"/>
        <dbReference type="ChEBI" id="CHEBI:83833"/>
        <dbReference type="ChEBI" id="CHEBI:83834"/>
        <dbReference type="EC" id="5.2.1.8"/>
    </reaction>
</comment>
<comment type="activity regulation">
    <text>Inhibited by the immunosuppressant drug cyclosporin A and by SDZ NIM811, a PPIase inhibitor.</text>
</comment>
<comment type="subcellular location">
    <subcellularLocation>
        <location evidence="3 5 7">Mitochondrion matrix</location>
    </subcellularLocation>
</comment>
<comment type="miscellaneous">
    <text evidence="4">Present with 1960 molecules/cell in log phase SD medium.</text>
</comment>
<comment type="similarity">
    <text evidence="9">Belongs to the cyclophilin-type PPIase family.</text>
</comment>
<organism>
    <name type="scientific">Saccharomyces cerevisiae (strain ATCC 204508 / S288c)</name>
    <name type="common">Baker's yeast</name>
    <dbReference type="NCBI Taxonomy" id="559292"/>
    <lineage>
        <taxon>Eukaryota</taxon>
        <taxon>Fungi</taxon>
        <taxon>Dikarya</taxon>
        <taxon>Ascomycota</taxon>
        <taxon>Saccharomycotina</taxon>
        <taxon>Saccharomycetes</taxon>
        <taxon>Saccharomycetales</taxon>
        <taxon>Saccharomycetaceae</taxon>
        <taxon>Saccharomyces</taxon>
    </lineage>
</organism>
<dbReference type="EC" id="5.2.1.8"/>
<dbReference type="EMBL" id="M84758">
    <property type="protein sequence ID" value="AAA34548.1"/>
    <property type="molecule type" value="Genomic_DNA"/>
</dbReference>
<dbReference type="EMBL" id="X56962">
    <property type="protein sequence ID" value="CAA40282.1"/>
    <property type="molecule type" value="Genomic_DNA"/>
</dbReference>
<dbReference type="EMBL" id="Z46373">
    <property type="protein sequence ID" value="CAA86500.1"/>
    <property type="molecule type" value="Genomic_DNA"/>
</dbReference>
<dbReference type="EMBL" id="AY557761">
    <property type="protein sequence ID" value="AAS56087.1"/>
    <property type="molecule type" value="Genomic_DNA"/>
</dbReference>
<dbReference type="EMBL" id="BK006946">
    <property type="protein sequence ID" value="DAA09819.1"/>
    <property type="molecule type" value="Genomic_DNA"/>
</dbReference>
<dbReference type="PIR" id="S30507">
    <property type="entry name" value="S30507"/>
</dbReference>
<dbReference type="RefSeq" id="NP_013633.1">
    <property type="nucleotide sequence ID" value="NM_001182437.1"/>
</dbReference>
<dbReference type="SMR" id="P25719"/>
<dbReference type="BioGRID" id="35063">
    <property type="interactions" value="144"/>
</dbReference>
<dbReference type="DIP" id="DIP-6534N"/>
<dbReference type="FunCoup" id="P25719">
    <property type="interactions" value="499"/>
</dbReference>
<dbReference type="IntAct" id="P25719">
    <property type="interactions" value="56"/>
</dbReference>
<dbReference type="MINT" id="P25719"/>
<dbReference type="STRING" id="4932.YML078W"/>
<dbReference type="iPTMnet" id="P25719"/>
<dbReference type="PaxDb" id="4932-YML078W"/>
<dbReference type="PeptideAtlas" id="P25719"/>
<dbReference type="EnsemblFungi" id="YML078W_mRNA">
    <property type="protein sequence ID" value="YML078W"/>
    <property type="gene ID" value="YML078W"/>
</dbReference>
<dbReference type="GeneID" id="854897"/>
<dbReference type="KEGG" id="sce:YML078W"/>
<dbReference type="AGR" id="SGD:S000004543"/>
<dbReference type="SGD" id="S000004543">
    <property type="gene designation" value="CPR3"/>
</dbReference>
<dbReference type="VEuPathDB" id="FungiDB:YML078W"/>
<dbReference type="eggNOG" id="KOG0865">
    <property type="taxonomic scope" value="Eukaryota"/>
</dbReference>
<dbReference type="GeneTree" id="ENSGT00940000176670"/>
<dbReference type="HOGENOM" id="CLU_012062_4_2_1"/>
<dbReference type="InParanoid" id="P25719"/>
<dbReference type="OMA" id="FNQDMQM"/>
<dbReference type="OrthoDB" id="193499at2759"/>
<dbReference type="BioCyc" id="YEAST:YML078W-MONOMER"/>
<dbReference type="BioGRID-ORCS" id="854897">
    <property type="hits" value="10 hits in 10 CRISPR screens"/>
</dbReference>
<dbReference type="PRO" id="PR:P25719"/>
<dbReference type="Proteomes" id="UP000002311">
    <property type="component" value="Chromosome XIII"/>
</dbReference>
<dbReference type="RNAct" id="P25719">
    <property type="molecule type" value="protein"/>
</dbReference>
<dbReference type="GO" id="GO:0005737">
    <property type="term" value="C:cytoplasm"/>
    <property type="evidence" value="ECO:0000318"/>
    <property type="project" value="GO_Central"/>
</dbReference>
<dbReference type="GO" id="GO:0005759">
    <property type="term" value="C:mitochondrial matrix"/>
    <property type="evidence" value="ECO:0007669"/>
    <property type="project" value="UniProtKB-SubCell"/>
</dbReference>
<dbReference type="GO" id="GO:0005739">
    <property type="term" value="C:mitochondrion"/>
    <property type="evidence" value="ECO:0000314"/>
    <property type="project" value="SGD"/>
</dbReference>
<dbReference type="GO" id="GO:0016018">
    <property type="term" value="F:cyclosporin A binding"/>
    <property type="evidence" value="ECO:0000318"/>
    <property type="project" value="GO_Central"/>
</dbReference>
<dbReference type="GO" id="GO:0003755">
    <property type="term" value="F:peptidyl-prolyl cis-trans isomerase activity"/>
    <property type="evidence" value="ECO:0000314"/>
    <property type="project" value="SGD"/>
</dbReference>
<dbReference type="GO" id="GO:0006915">
    <property type="term" value="P:apoptotic process"/>
    <property type="evidence" value="ECO:0000315"/>
    <property type="project" value="SGD"/>
</dbReference>
<dbReference type="GO" id="GO:0006457">
    <property type="term" value="P:protein folding"/>
    <property type="evidence" value="ECO:0000314"/>
    <property type="project" value="SGD"/>
</dbReference>
<dbReference type="CDD" id="cd01926">
    <property type="entry name" value="cyclophilin_ABH_like"/>
    <property type="match status" value="1"/>
</dbReference>
<dbReference type="FunFam" id="2.40.100.10:FF:000032">
    <property type="entry name" value="Peptidyl-prolyl cis-trans isomerase"/>
    <property type="match status" value="1"/>
</dbReference>
<dbReference type="Gene3D" id="2.40.100.10">
    <property type="entry name" value="Cyclophilin-like"/>
    <property type="match status" value="1"/>
</dbReference>
<dbReference type="InterPro" id="IPR029000">
    <property type="entry name" value="Cyclophilin-like_dom_sf"/>
</dbReference>
<dbReference type="InterPro" id="IPR024936">
    <property type="entry name" value="Cyclophilin-type_PPIase"/>
</dbReference>
<dbReference type="InterPro" id="IPR020892">
    <property type="entry name" value="Cyclophilin-type_PPIase_CS"/>
</dbReference>
<dbReference type="InterPro" id="IPR002130">
    <property type="entry name" value="Cyclophilin-type_PPIase_dom"/>
</dbReference>
<dbReference type="PANTHER" id="PTHR11071">
    <property type="entry name" value="PEPTIDYL-PROLYL CIS-TRANS ISOMERASE"/>
    <property type="match status" value="1"/>
</dbReference>
<dbReference type="PANTHER" id="PTHR11071:SF327">
    <property type="entry name" value="PEPTIDYL-PROLYL CIS-TRANS ISOMERASE C, MITOCHONDRIAL"/>
    <property type="match status" value="1"/>
</dbReference>
<dbReference type="Pfam" id="PF00160">
    <property type="entry name" value="Pro_isomerase"/>
    <property type="match status" value="1"/>
</dbReference>
<dbReference type="PIRSF" id="PIRSF001467">
    <property type="entry name" value="Peptidylpro_ismrse"/>
    <property type="match status" value="1"/>
</dbReference>
<dbReference type="PRINTS" id="PR00153">
    <property type="entry name" value="CSAPPISMRASE"/>
</dbReference>
<dbReference type="SUPFAM" id="SSF50891">
    <property type="entry name" value="Cyclophilin-like"/>
    <property type="match status" value="1"/>
</dbReference>
<dbReference type="PROSITE" id="PS00170">
    <property type="entry name" value="CSA_PPIASE_1"/>
    <property type="match status" value="1"/>
</dbReference>
<dbReference type="PROSITE" id="PS50072">
    <property type="entry name" value="CSA_PPIASE_2"/>
    <property type="match status" value="1"/>
</dbReference>
<evidence type="ECO:0000255" key="1">
    <source>
        <dbReference type="PROSITE-ProRule" id="PRU00156"/>
    </source>
</evidence>
<evidence type="ECO:0000269" key="2">
    <source>
    </source>
</evidence>
<evidence type="ECO:0000269" key="3">
    <source>
    </source>
</evidence>
<evidence type="ECO:0000269" key="4">
    <source>
    </source>
</evidence>
<evidence type="ECO:0000269" key="5">
    <source>
    </source>
</evidence>
<evidence type="ECO:0000269" key="6">
    <source>
    </source>
</evidence>
<evidence type="ECO:0000269" key="7">
    <source>
    </source>
</evidence>
<evidence type="ECO:0000269" key="8">
    <source>
    </source>
</evidence>
<evidence type="ECO:0000305" key="9"/>
<gene>
    <name type="primary">CPR3</name>
    <name type="synonym">CYP3</name>
    <name type="ordered locus">YML078W</name>
</gene>
<sequence>MFKRSIIQQSRLFSNSASRLGKKVFFDPAVNGTKIGRIEFELYDNVVPKTAENFRALCTGEKGWGYKGVPFHRIIPDFMIQGGDTDLTNGFGGKSIYGSKFADENFVKKHDKAGLLSMANAGPNTNGSQFFITTVPCPWLDGKHVVFGEVTKGMDIVKAIESYGTASGKPRAEIVIEEAGEL</sequence>
<reference key="1">
    <citation type="journal article" date="1992" name="Gene">
        <title>The yeast cyclophilin multigene family: purification, cloning and characterization of a new isoform.</title>
        <authorList>
            <person name="McLaughlin M.M."/>
            <person name="Bossard M.J."/>
            <person name="Koser P.L."/>
            <person name="Cafferkey R."/>
            <person name="Morris R.A."/>
            <person name="Miles L.M."/>
            <person name="Strickler J."/>
            <person name="Bergsma D.J."/>
            <person name="Levy M.A."/>
            <person name="Livi G.P."/>
        </authorList>
    </citation>
    <scope>NUCLEOTIDE SEQUENCE [GENOMIC DNA]</scope>
    <scope>PROTEIN SEQUENCE OF 21-35</scope>
</reference>
<reference key="2">
    <citation type="journal article" date="1992" name="Proc. Natl. Acad. Sci. U.S.A.">
        <title>A yeast cyclophilin gene essential for lactate metabolism at high temperature.</title>
        <authorList>
            <person name="Davis E.S."/>
            <person name="Becker A."/>
            <person name="Heitman J."/>
            <person name="Hall M.N."/>
            <person name="Brennan M.B."/>
        </authorList>
    </citation>
    <scope>NUCLEOTIDE SEQUENCE [GENOMIC DNA]</scope>
</reference>
<reference key="3">
    <citation type="journal article" date="1997" name="Nature">
        <title>The nucleotide sequence of Saccharomyces cerevisiae chromosome XIII.</title>
        <authorList>
            <person name="Bowman S."/>
            <person name="Churcher C.M."/>
            <person name="Badcock K."/>
            <person name="Brown D."/>
            <person name="Chillingworth T."/>
            <person name="Connor R."/>
            <person name="Dedman K."/>
            <person name="Devlin K."/>
            <person name="Gentles S."/>
            <person name="Hamlin N."/>
            <person name="Hunt S."/>
            <person name="Jagels K."/>
            <person name="Lye G."/>
            <person name="Moule S."/>
            <person name="Odell C."/>
            <person name="Pearson D."/>
            <person name="Rajandream M.A."/>
            <person name="Rice P."/>
            <person name="Skelton J."/>
            <person name="Walsh S.V."/>
            <person name="Whitehead S."/>
            <person name="Barrell B.G."/>
        </authorList>
    </citation>
    <scope>NUCLEOTIDE SEQUENCE [LARGE SCALE GENOMIC DNA]</scope>
    <source>
        <strain>ATCC 204508 / S288c</strain>
    </source>
</reference>
<reference key="4">
    <citation type="journal article" date="2014" name="G3 (Bethesda)">
        <title>The reference genome sequence of Saccharomyces cerevisiae: Then and now.</title>
        <authorList>
            <person name="Engel S.R."/>
            <person name="Dietrich F.S."/>
            <person name="Fisk D.G."/>
            <person name="Binkley G."/>
            <person name="Balakrishnan R."/>
            <person name="Costanzo M.C."/>
            <person name="Dwight S.S."/>
            <person name="Hitz B.C."/>
            <person name="Karra K."/>
            <person name="Nash R.S."/>
            <person name="Weng S."/>
            <person name="Wong E.D."/>
            <person name="Lloyd P."/>
            <person name="Skrzypek M.S."/>
            <person name="Miyasato S.R."/>
            <person name="Simison M."/>
            <person name="Cherry J.M."/>
        </authorList>
    </citation>
    <scope>GENOME REANNOTATION</scope>
    <source>
        <strain>ATCC 204508 / S288c</strain>
    </source>
</reference>
<reference key="5">
    <citation type="journal article" date="2007" name="Genome Res.">
        <title>Approaching a complete repository of sequence-verified protein-encoding clones for Saccharomyces cerevisiae.</title>
        <authorList>
            <person name="Hu Y."/>
            <person name="Rolfs A."/>
            <person name="Bhullar B."/>
            <person name="Murthy T.V.S."/>
            <person name="Zhu C."/>
            <person name="Berger M.F."/>
            <person name="Camargo A.A."/>
            <person name="Kelley F."/>
            <person name="McCarron S."/>
            <person name="Jepson D."/>
            <person name="Richardson A."/>
            <person name="Raphael J."/>
            <person name="Moreira D."/>
            <person name="Taycher E."/>
            <person name="Zuo D."/>
            <person name="Mohr S."/>
            <person name="Kane M.F."/>
            <person name="Williamson J."/>
            <person name="Simpson A.J.G."/>
            <person name="Bulyk M.L."/>
            <person name="Harlow E."/>
            <person name="Marsischky G."/>
            <person name="Kolodner R.D."/>
            <person name="LaBaer J."/>
        </authorList>
    </citation>
    <scope>NUCLEOTIDE SEQUENCE [GENOMIC DNA]</scope>
    <source>
        <strain>ATCC 204508 / S288c</strain>
    </source>
</reference>
<reference key="6">
    <citation type="journal article" date="1993" name="Biochim. Biophys. Acta">
        <title>Purification and properties of multiple molecular forms of yeast peptidyl prolyl cis-trans isomerase.</title>
        <authorList>
            <person name="Hasumi H."/>
            <person name="Nishikawa T."/>
        </authorList>
    </citation>
    <scope>PARTIAL PROTEIN SEQUENCE OF 21-63</scope>
    <scope>FUNCTION</scope>
    <scope>CATALYTIC ACTIVITY</scope>
</reference>
<reference key="7">
    <citation type="journal article" date="1995" name="Proc. Natl. Acad. Sci. U.S.A.">
        <title>Cyclophilin catalyzes protein folding in yeast mitochondria.</title>
        <authorList>
            <person name="Matouschek A."/>
            <person name="Rospert S."/>
            <person name="Schmid K."/>
            <person name="Glick B.S."/>
            <person name="Schatz G."/>
        </authorList>
    </citation>
    <scope>FUNCTION</scope>
    <scope>SUBCELLULAR LOCATION</scope>
</reference>
<reference key="8">
    <citation type="journal article" date="1999" name="FEBS Lett.">
        <title>R73A and H144Q mutants of the yeast mitochondrial cyclophilin Cpr3 exhibit a low prolyl isomerase activity in both peptide and protein-folding assays.</title>
        <authorList>
            <person name="Scholz C."/>
            <person name="Maier P."/>
            <person name="Dolinski K."/>
            <person name="Heitman J."/>
            <person name="Schmid F.X."/>
        </authorList>
    </citation>
    <scope>FUNCTION</scope>
    <scope>MUTAGENESIS OF ARG-73 AND HIS-144</scope>
</reference>
<reference key="9">
    <citation type="journal article" date="2003" name="Nature">
        <title>Global analysis of protein localization in budding yeast.</title>
        <authorList>
            <person name="Huh W.-K."/>
            <person name="Falvo J.V."/>
            <person name="Gerke L.C."/>
            <person name="Carroll A.S."/>
            <person name="Howson R.W."/>
            <person name="Weissman J.S."/>
            <person name="O'Shea E.K."/>
        </authorList>
    </citation>
    <scope>SUBCELLULAR LOCATION [LARGE SCALE ANALYSIS]</scope>
</reference>
<reference key="10">
    <citation type="journal article" date="2003" name="Nature">
        <title>Global analysis of protein expression in yeast.</title>
        <authorList>
            <person name="Ghaemmaghami S."/>
            <person name="Huh W.-K."/>
            <person name="Bower K."/>
            <person name="Howson R.W."/>
            <person name="Belle A."/>
            <person name="Dephoure N."/>
            <person name="O'Shea E.K."/>
            <person name="Weissman J.S."/>
        </authorList>
    </citation>
    <scope>LEVEL OF PROTEIN EXPRESSION [LARGE SCALE ANALYSIS]</scope>
</reference>
<reference key="11">
    <citation type="journal article" date="2003" name="Proc. Natl. Acad. Sci. U.S.A.">
        <title>The proteome of Saccharomyces cerevisiae mitochondria.</title>
        <authorList>
            <person name="Sickmann A."/>
            <person name="Reinders J."/>
            <person name="Wagner Y."/>
            <person name="Joppich C."/>
            <person name="Zahedi R.P."/>
            <person name="Meyer H.E."/>
            <person name="Schoenfisch B."/>
            <person name="Perschil I."/>
            <person name="Chacinska A."/>
            <person name="Guiard B."/>
            <person name="Rehling P."/>
            <person name="Pfanner N."/>
            <person name="Meisinger C."/>
        </authorList>
    </citation>
    <scope>SUBCELLULAR LOCATION [LARGE SCALE ANALYSIS]</scope>
    <source>
        <strain>ATCC 76625 / YPH499</strain>
    </source>
</reference>
<reference key="12">
    <citation type="journal article" date="2007" name="J. Proteome Res.">
        <title>Large-scale phosphorylation analysis of alpha-factor-arrested Saccharomyces cerevisiae.</title>
        <authorList>
            <person name="Li X."/>
            <person name="Gerber S.A."/>
            <person name="Rudner A.D."/>
            <person name="Beausoleil S.A."/>
            <person name="Haas W."/>
            <person name="Villen J."/>
            <person name="Elias J.E."/>
            <person name="Gygi S.P."/>
        </authorList>
    </citation>
    <scope>IDENTIFICATION BY MASS SPECTROMETRY [LARGE SCALE ANALYSIS]</scope>
    <source>
        <strain>ADR376</strain>
    </source>
</reference>
<reference key="13">
    <citation type="journal article" date="2008" name="Mol. Cell. Proteomics">
        <title>A multidimensional chromatography technology for in-depth phosphoproteome analysis.</title>
        <authorList>
            <person name="Albuquerque C.P."/>
            <person name="Smolka M.B."/>
            <person name="Payne S.H."/>
            <person name="Bafna V."/>
            <person name="Eng J."/>
            <person name="Zhou H."/>
        </authorList>
    </citation>
    <scope>IDENTIFICATION BY MASS SPECTROMETRY [LARGE SCALE ANALYSIS]</scope>
</reference>
<accession>P25719</accession>
<accession>D6W0K5</accession>
<name>CYPC_YEAST</name>